<reference key="1">
    <citation type="journal article" date="2008" name="PLoS ONE">
        <title>Comparative analysis of Acinetobacters: three genomes for three lifestyles.</title>
        <authorList>
            <person name="Vallenet D."/>
            <person name="Nordmann P."/>
            <person name="Barbe V."/>
            <person name="Poirel L."/>
            <person name="Mangenot S."/>
            <person name="Bataille E."/>
            <person name="Dossat C."/>
            <person name="Gas S."/>
            <person name="Kreimeyer A."/>
            <person name="Lenoble P."/>
            <person name="Oztas S."/>
            <person name="Poulain J."/>
            <person name="Segurens B."/>
            <person name="Robert C."/>
            <person name="Abergel C."/>
            <person name="Claverie J.-M."/>
            <person name="Raoult D."/>
            <person name="Medigue C."/>
            <person name="Weissenbach J."/>
            <person name="Cruveiller S."/>
        </authorList>
    </citation>
    <scope>NUCLEOTIDE SEQUENCE [LARGE SCALE GENOMIC DNA]</scope>
    <source>
        <strain>AYE</strain>
    </source>
</reference>
<accession>B0V5P2</accession>
<feature type="chain" id="PRO_1000098536" description="Threonine--tRNA ligase">
    <location>
        <begin position="1"/>
        <end position="640"/>
    </location>
</feature>
<feature type="domain" description="TGS" evidence="2">
    <location>
        <begin position="1"/>
        <end position="61"/>
    </location>
</feature>
<feature type="region of interest" description="Catalytic" evidence="1">
    <location>
        <begin position="242"/>
        <end position="533"/>
    </location>
</feature>
<feature type="binding site" evidence="1">
    <location>
        <position position="333"/>
    </location>
    <ligand>
        <name>Zn(2+)</name>
        <dbReference type="ChEBI" id="CHEBI:29105"/>
    </ligand>
</feature>
<feature type="binding site" evidence="1">
    <location>
        <position position="384"/>
    </location>
    <ligand>
        <name>Zn(2+)</name>
        <dbReference type="ChEBI" id="CHEBI:29105"/>
    </ligand>
</feature>
<feature type="binding site" evidence="1">
    <location>
        <position position="510"/>
    </location>
    <ligand>
        <name>Zn(2+)</name>
        <dbReference type="ChEBI" id="CHEBI:29105"/>
    </ligand>
</feature>
<sequence length="640" mass="73151">MPIITLPNGDQKSFDHPVSVMEVAQSIGPGLAKNTVAGRVNDRLVDACDLITEDSTLQIITPKDEEGLEIIRHSCAHLVGHAVKQLFPEAKMVIGPVIEEGFYYDIWMPRPFTLDDMAAIEERMKKLIDQDYDVIKKMTPRDEVIKVFTDRGEEYKLRLVEDMPEEKAMGLYYHQEYVDMCRGPHVPNTKFLKSFKLTKISGAYWRGDAKNEQLQRIYGTAWADKKQLAAYIKRIEEAEKRDHRKIGKALDLFHMQEEAPGMVFWHANGWTIYQVLEQYMRKVQQDNGYQEIKTPQIVDFTLWEKSGHAANYAENMFTTHSESRNYAVKPMNCPCHVQVFNQGLKSYRDLPIRLAEFGSCHRNEPSGSLHGIMRVRGFTQDDAHIFCTKEQIGKEVADFIKLTLDVYKDFGFEEVQMKLSTRPEKRVGDDALWDLAEKSLADALDAAGLEWELQPGEGAFYGPKIEFSLKDCLGRVWQCGTIQCDFNLPVRLDASYVTEENERDQPVMLHRAILGSFERFIGILIEHYAGFMPPWLSPVQACVMNITDSQAEASEQVVAKLKENGLRAISDLRNEKIGFKIRERTLERIPYLLVLGDREVEEGTVNVRTRSGKNLGTMSVDAFIDLVKSAVAERGRYIVE</sequence>
<organism>
    <name type="scientific">Acinetobacter baumannii (strain AYE)</name>
    <dbReference type="NCBI Taxonomy" id="509173"/>
    <lineage>
        <taxon>Bacteria</taxon>
        <taxon>Pseudomonadati</taxon>
        <taxon>Pseudomonadota</taxon>
        <taxon>Gammaproteobacteria</taxon>
        <taxon>Moraxellales</taxon>
        <taxon>Moraxellaceae</taxon>
        <taxon>Acinetobacter</taxon>
        <taxon>Acinetobacter calcoaceticus/baumannii complex</taxon>
    </lineage>
</organism>
<evidence type="ECO:0000255" key="1">
    <source>
        <dbReference type="HAMAP-Rule" id="MF_00184"/>
    </source>
</evidence>
<evidence type="ECO:0000255" key="2">
    <source>
        <dbReference type="PROSITE-ProRule" id="PRU01228"/>
    </source>
</evidence>
<proteinExistence type="inferred from homology"/>
<dbReference type="EC" id="6.1.1.3" evidence="1"/>
<dbReference type="EMBL" id="CU459141">
    <property type="protein sequence ID" value="CAM87978.1"/>
    <property type="molecule type" value="Genomic_DNA"/>
</dbReference>
<dbReference type="RefSeq" id="WP_001121792.1">
    <property type="nucleotide sequence ID" value="NZ_JBDGFB010000020.1"/>
</dbReference>
<dbReference type="SMR" id="B0V5P2"/>
<dbReference type="EnsemblBacteria" id="CAM87978">
    <property type="protein sequence ID" value="CAM87978"/>
    <property type="gene ID" value="ABAYE3169"/>
</dbReference>
<dbReference type="KEGG" id="aby:ABAYE3169"/>
<dbReference type="HOGENOM" id="CLU_008554_0_1_6"/>
<dbReference type="GO" id="GO:0005829">
    <property type="term" value="C:cytosol"/>
    <property type="evidence" value="ECO:0007669"/>
    <property type="project" value="TreeGrafter"/>
</dbReference>
<dbReference type="GO" id="GO:0005524">
    <property type="term" value="F:ATP binding"/>
    <property type="evidence" value="ECO:0007669"/>
    <property type="project" value="UniProtKB-UniRule"/>
</dbReference>
<dbReference type="GO" id="GO:0046872">
    <property type="term" value="F:metal ion binding"/>
    <property type="evidence" value="ECO:0007669"/>
    <property type="project" value="UniProtKB-KW"/>
</dbReference>
<dbReference type="GO" id="GO:0004829">
    <property type="term" value="F:threonine-tRNA ligase activity"/>
    <property type="evidence" value="ECO:0007669"/>
    <property type="project" value="UniProtKB-UniRule"/>
</dbReference>
<dbReference type="GO" id="GO:0000049">
    <property type="term" value="F:tRNA binding"/>
    <property type="evidence" value="ECO:0007669"/>
    <property type="project" value="UniProtKB-KW"/>
</dbReference>
<dbReference type="GO" id="GO:0006435">
    <property type="term" value="P:threonyl-tRNA aminoacylation"/>
    <property type="evidence" value="ECO:0007669"/>
    <property type="project" value="UniProtKB-UniRule"/>
</dbReference>
<dbReference type="CDD" id="cd01667">
    <property type="entry name" value="TGS_ThrRS"/>
    <property type="match status" value="1"/>
</dbReference>
<dbReference type="CDD" id="cd00860">
    <property type="entry name" value="ThrRS_anticodon"/>
    <property type="match status" value="1"/>
</dbReference>
<dbReference type="CDD" id="cd00771">
    <property type="entry name" value="ThrRS_core"/>
    <property type="match status" value="1"/>
</dbReference>
<dbReference type="FunFam" id="3.10.20.30:FF:000005">
    <property type="entry name" value="Threonine--tRNA ligase"/>
    <property type="match status" value="1"/>
</dbReference>
<dbReference type="FunFam" id="3.30.54.20:FF:000002">
    <property type="entry name" value="Threonine--tRNA ligase"/>
    <property type="match status" value="1"/>
</dbReference>
<dbReference type="FunFam" id="3.30.930.10:FF:000002">
    <property type="entry name" value="Threonine--tRNA ligase"/>
    <property type="match status" value="1"/>
</dbReference>
<dbReference type="FunFam" id="3.40.50.800:FF:000001">
    <property type="entry name" value="Threonine--tRNA ligase"/>
    <property type="match status" value="1"/>
</dbReference>
<dbReference type="FunFam" id="3.30.980.10:FF:000005">
    <property type="entry name" value="Threonyl-tRNA synthetase, mitochondrial"/>
    <property type="match status" value="1"/>
</dbReference>
<dbReference type="Gene3D" id="3.10.20.30">
    <property type="match status" value="1"/>
</dbReference>
<dbReference type="Gene3D" id="3.30.54.20">
    <property type="match status" value="1"/>
</dbReference>
<dbReference type="Gene3D" id="3.40.50.800">
    <property type="entry name" value="Anticodon-binding domain"/>
    <property type="match status" value="1"/>
</dbReference>
<dbReference type="Gene3D" id="3.30.930.10">
    <property type="entry name" value="Bira Bifunctional Protein, Domain 2"/>
    <property type="match status" value="1"/>
</dbReference>
<dbReference type="Gene3D" id="3.30.980.10">
    <property type="entry name" value="Threonyl-trna Synthetase, Chain A, domain 2"/>
    <property type="match status" value="1"/>
</dbReference>
<dbReference type="HAMAP" id="MF_00184">
    <property type="entry name" value="Thr_tRNA_synth"/>
    <property type="match status" value="1"/>
</dbReference>
<dbReference type="InterPro" id="IPR002314">
    <property type="entry name" value="aa-tRNA-synt_IIb"/>
</dbReference>
<dbReference type="InterPro" id="IPR006195">
    <property type="entry name" value="aa-tRNA-synth_II"/>
</dbReference>
<dbReference type="InterPro" id="IPR045864">
    <property type="entry name" value="aa-tRNA-synth_II/BPL/LPL"/>
</dbReference>
<dbReference type="InterPro" id="IPR004154">
    <property type="entry name" value="Anticodon-bd"/>
</dbReference>
<dbReference type="InterPro" id="IPR036621">
    <property type="entry name" value="Anticodon-bd_dom_sf"/>
</dbReference>
<dbReference type="InterPro" id="IPR012675">
    <property type="entry name" value="Beta-grasp_dom_sf"/>
</dbReference>
<dbReference type="InterPro" id="IPR004095">
    <property type="entry name" value="TGS"/>
</dbReference>
<dbReference type="InterPro" id="IPR012676">
    <property type="entry name" value="TGS-like"/>
</dbReference>
<dbReference type="InterPro" id="IPR002320">
    <property type="entry name" value="Thr-tRNA-ligase_IIa"/>
</dbReference>
<dbReference type="InterPro" id="IPR018163">
    <property type="entry name" value="Thr/Ala-tRNA-synth_IIc_edit"/>
</dbReference>
<dbReference type="InterPro" id="IPR047246">
    <property type="entry name" value="ThrRS_anticodon"/>
</dbReference>
<dbReference type="InterPro" id="IPR033728">
    <property type="entry name" value="ThrRS_core"/>
</dbReference>
<dbReference type="InterPro" id="IPR012947">
    <property type="entry name" value="tRNA_SAD"/>
</dbReference>
<dbReference type="NCBIfam" id="TIGR00418">
    <property type="entry name" value="thrS"/>
    <property type="match status" value="1"/>
</dbReference>
<dbReference type="PANTHER" id="PTHR11451:SF44">
    <property type="entry name" value="THREONINE--TRNA LIGASE, CHLOROPLASTIC_MITOCHONDRIAL 2"/>
    <property type="match status" value="1"/>
</dbReference>
<dbReference type="PANTHER" id="PTHR11451">
    <property type="entry name" value="THREONINE-TRNA LIGASE"/>
    <property type="match status" value="1"/>
</dbReference>
<dbReference type="Pfam" id="PF03129">
    <property type="entry name" value="HGTP_anticodon"/>
    <property type="match status" value="1"/>
</dbReference>
<dbReference type="Pfam" id="PF02824">
    <property type="entry name" value="TGS"/>
    <property type="match status" value="1"/>
</dbReference>
<dbReference type="Pfam" id="PF00587">
    <property type="entry name" value="tRNA-synt_2b"/>
    <property type="match status" value="1"/>
</dbReference>
<dbReference type="Pfam" id="PF07973">
    <property type="entry name" value="tRNA_SAD"/>
    <property type="match status" value="1"/>
</dbReference>
<dbReference type="PRINTS" id="PR01047">
    <property type="entry name" value="TRNASYNTHTHR"/>
</dbReference>
<dbReference type="SMART" id="SM00863">
    <property type="entry name" value="tRNA_SAD"/>
    <property type="match status" value="1"/>
</dbReference>
<dbReference type="SUPFAM" id="SSF52954">
    <property type="entry name" value="Class II aaRS ABD-related"/>
    <property type="match status" value="1"/>
</dbReference>
<dbReference type="SUPFAM" id="SSF55681">
    <property type="entry name" value="Class II aaRS and biotin synthetases"/>
    <property type="match status" value="1"/>
</dbReference>
<dbReference type="SUPFAM" id="SSF81271">
    <property type="entry name" value="TGS-like"/>
    <property type="match status" value="1"/>
</dbReference>
<dbReference type="SUPFAM" id="SSF55186">
    <property type="entry name" value="ThrRS/AlaRS common domain"/>
    <property type="match status" value="1"/>
</dbReference>
<dbReference type="PROSITE" id="PS50862">
    <property type="entry name" value="AA_TRNA_LIGASE_II"/>
    <property type="match status" value="1"/>
</dbReference>
<dbReference type="PROSITE" id="PS51880">
    <property type="entry name" value="TGS"/>
    <property type="match status" value="1"/>
</dbReference>
<keyword id="KW-0030">Aminoacyl-tRNA synthetase</keyword>
<keyword id="KW-0067">ATP-binding</keyword>
<keyword id="KW-0963">Cytoplasm</keyword>
<keyword id="KW-0436">Ligase</keyword>
<keyword id="KW-0479">Metal-binding</keyword>
<keyword id="KW-0547">Nucleotide-binding</keyword>
<keyword id="KW-0648">Protein biosynthesis</keyword>
<keyword id="KW-0694">RNA-binding</keyword>
<keyword id="KW-0820">tRNA-binding</keyword>
<keyword id="KW-0862">Zinc</keyword>
<gene>
    <name evidence="1" type="primary">thrS</name>
    <name type="ordered locus">ABAYE3169</name>
</gene>
<name>SYT_ACIBY</name>
<protein>
    <recommendedName>
        <fullName evidence="1">Threonine--tRNA ligase</fullName>
        <ecNumber evidence="1">6.1.1.3</ecNumber>
    </recommendedName>
    <alternativeName>
        <fullName evidence="1">Threonyl-tRNA synthetase</fullName>
        <shortName evidence="1">ThrRS</shortName>
    </alternativeName>
</protein>
<comment type="function">
    <text evidence="1">Catalyzes the attachment of threonine to tRNA(Thr) in a two-step reaction: L-threonine is first activated by ATP to form Thr-AMP and then transferred to the acceptor end of tRNA(Thr). Also edits incorrectly charged L-seryl-tRNA(Thr).</text>
</comment>
<comment type="catalytic activity">
    <reaction evidence="1">
        <text>tRNA(Thr) + L-threonine + ATP = L-threonyl-tRNA(Thr) + AMP + diphosphate + H(+)</text>
        <dbReference type="Rhea" id="RHEA:24624"/>
        <dbReference type="Rhea" id="RHEA-COMP:9670"/>
        <dbReference type="Rhea" id="RHEA-COMP:9704"/>
        <dbReference type="ChEBI" id="CHEBI:15378"/>
        <dbReference type="ChEBI" id="CHEBI:30616"/>
        <dbReference type="ChEBI" id="CHEBI:33019"/>
        <dbReference type="ChEBI" id="CHEBI:57926"/>
        <dbReference type="ChEBI" id="CHEBI:78442"/>
        <dbReference type="ChEBI" id="CHEBI:78534"/>
        <dbReference type="ChEBI" id="CHEBI:456215"/>
        <dbReference type="EC" id="6.1.1.3"/>
    </reaction>
</comment>
<comment type="cofactor">
    <cofactor evidence="1">
        <name>Zn(2+)</name>
        <dbReference type="ChEBI" id="CHEBI:29105"/>
    </cofactor>
    <text evidence="1">Binds 1 zinc ion per subunit.</text>
</comment>
<comment type="subunit">
    <text evidence="1">Homodimer.</text>
</comment>
<comment type="subcellular location">
    <subcellularLocation>
        <location evidence="1">Cytoplasm</location>
    </subcellularLocation>
</comment>
<comment type="similarity">
    <text evidence="1">Belongs to the class-II aminoacyl-tRNA synthetase family.</text>
</comment>